<accession>A3D311</accession>
<keyword id="KW-0275">Fatty acid biosynthesis</keyword>
<keyword id="KW-0276">Fatty acid metabolism</keyword>
<keyword id="KW-0444">Lipid biosynthesis</keyword>
<keyword id="KW-0443">Lipid metabolism</keyword>
<keyword id="KW-0520">NAD</keyword>
<keyword id="KW-0560">Oxidoreductase</keyword>
<keyword id="KW-1185">Reference proteome</keyword>
<evidence type="ECO:0000255" key="1">
    <source>
        <dbReference type="HAMAP-Rule" id="MF_01838"/>
    </source>
</evidence>
<gene>
    <name evidence="1" type="primary">fabV</name>
    <name type="ordered locus">Sbal_1610</name>
</gene>
<reference key="1">
    <citation type="submission" date="2007-02" db="EMBL/GenBank/DDBJ databases">
        <title>Complete sequence of chromosome of Shewanella baltica OS155.</title>
        <authorList>
            <consortium name="US DOE Joint Genome Institute"/>
            <person name="Copeland A."/>
            <person name="Lucas S."/>
            <person name="Lapidus A."/>
            <person name="Barry K."/>
            <person name="Detter J.C."/>
            <person name="Glavina del Rio T."/>
            <person name="Hammon N."/>
            <person name="Israni S."/>
            <person name="Dalin E."/>
            <person name="Tice H."/>
            <person name="Pitluck S."/>
            <person name="Sims D.R."/>
            <person name="Brettin T."/>
            <person name="Bruce D."/>
            <person name="Han C."/>
            <person name="Tapia R."/>
            <person name="Brainard J."/>
            <person name="Schmutz J."/>
            <person name="Larimer F."/>
            <person name="Land M."/>
            <person name="Hauser L."/>
            <person name="Kyrpides N."/>
            <person name="Mikhailova N."/>
            <person name="Brettar I."/>
            <person name="Klappenbach J."/>
            <person name="Konstantinidis K."/>
            <person name="Rodrigues J."/>
            <person name="Tiedje J."/>
            <person name="Richardson P."/>
        </authorList>
    </citation>
    <scope>NUCLEOTIDE SEQUENCE [LARGE SCALE GENOMIC DNA]</scope>
    <source>
        <strain>OS155 / ATCC BAA-1091</strain>
    </source>
</reference>
<comment type="function">
    <text evidence="1">Involved in the final reduction of the elongation cycle of fatty acid synthesis (FAS II). Catalyzes the reduction of a carbon-carbon double bond in an enoyl moiety that is covalently linked to an acyl carrier protein (ACP).</text>
</comment>
<comment type="catalytic activity">
    <reaction evidence="1">
        <text>a 2,3-saturated acyl-[ACP] + NAD(+) = a (2E)-enoyl-[ACP] + NADH + H(+)</text>
        <dbReference type="Rhea" id="RHEA:10240"/>
        <dbReference type="Rhea" id="RHEA-COMP:9925"/>
        <dbReference type="Rhea" id="RHEA-COMP:9926"/>
        <dbReference type="ChEBI" id="CHEBI:15378"/>
        <dbReference type="ChEBI" id="CHEBI:57540"/>
        <dbReference type="ChEBI" id="CHEBI:57945"/>
        <dbReference type="ChEBI" id="CHEBI:78784"/>
        <dbReference type="ChEBI" id="CHEBI:78785"/>
        <dbReference type="EC" id="1.3.1.9"/>
    </reaction>
</comment>
<comment type="pathway">
    <text evidence="1">Lipid metabolism; fatty acid biosynthesis.</text>
</comment>
<comment type="subunit">
    <text evidence="1">Monomer.</text>
</comment>
<comment type="similarity">
    <text evidence="1">Belongs to the TER reductase family.</text>
</comment>
<protein>
    <recommendedName>
        <fullName evidence="1">Enoyl-[acyl-carrier-protein] reductase [NADH]</fullName>
        <shortName evidence="1">ENR</shortName>
        <ecNumber evidence="1">1.3.1.9</ecNumber>
    </recommendedName>
</protein>
<feature type="chain" id="PRO_1000070496" description="Enoyl-[acyl-carrier-protein] reductase [NADH]">
    <location>
        <begin position="1"/>
        <end position="400"/>
    </location>
</feature>
<feature type="active site" description="Proton donor" evidence="1">
    <location>
        <position position="235"/>
    </location>
</feature>
<feature type="binding site" evidence="1">
    <location>
        <begin position="48"/>
        <end position="53"/>
    </location>
    <ligand>
        <name>NAD(+)</name>
        <dbReference type="ChEBI" id="CHEBI:57540"/>
    </ligand>
</feature>
<feature type="binding site" evidence="1">
    <location>
        <begin position="74"/>
        <end position="75"/>
    </location>
    <ligand>
        <name>NAD(+)</name>
        <dbReference type="ChEBI" id="CHEBI:57540"/>
    </ligand>
</feature>
<feature type="binding site" evidence="1">
    <location>
        <begin position="111"/>
        <end position="112"/>
    </location>
    <ligand>
        <name>NAD(+)</name>
        <dbReference type="ChEBI" id="CHEBI:57540"/>
    </ligand>
</feature>
<feature type="binding site" evidence="1">
    <location>
        <begin position="139"/>
        <end position="140"/>
    </location>
    <ligand>
        <name>NAD(+)</name>
        <dbReference type="ChEBI" id="CHEBI:57540"/>
    </ligand>
</feature>
<feature type="binding site" evidence="1">
    <location>
        <position position="225"/>
    </location>
    <ligand>
        <name>substrate</name>
    </ligand>
</feature>
<feature type="binding site" evidence="1">
    <location>
        <position position="244"/>
    </location>
    <ligand>
        <name>NAD(+)</name>
        <dbReference type="ChEBI" id="CHEBI:57540"/>
    </ligand>
</feature>
<feature type="binding site" evidence="1">
    <location>
        <begin position="273"/>
        <end position="275"/>
    </location>
    <ligand>
        <name>NAD(+)</name>
        <dbReference type="ChEBI" id="CHEBI:57540"/>
    </ligand>
</feature>
<feature type="site" description="Plays an important role in discriminating NADH against NADPH" evidence="1">
    <location>
        <position position="75"/>
    </location>
</feature>
<sequence>MIIKPKIRGFICTTTHPVGCEANVQEQITLTKAKGKIANGPKKVLVVGSSSGYGLSSRIAAAFGSDAATIGVFFEKPGTETKPGTAGWYNSAAFDKFAKAEGLYSKSINCDAFSHEAKQKVIELIKQDLGEIDMVVYSLASPVRKLPDSGELIRSALKPIGETYTATAVDTNKDCIIEATVEPATEQEIADTVTVMGGEDWELWIKALSEAGVLADNCKTVAYSYIGTELTWPIYWHGALGKAKMDLDRAAKALNEQLSATGGSANVAVLKSVVTQASSAIPVMPLYIAMVFKKMRQEGLHEGCMEQIYRMFSERLFRADGAKPETDSDNRIRLDDWELREDIQQHCRNLWPQVTTENLSELTDYREYKAEFIKLFGFGIEGIDYDADVNPYVEFDVIEL</sequence>
<name>FABV_SHEB5</name>
<dbReference type="EC" id="1.3.1.9" evidence="1"/>
<dbReference type="EMBL" id="CP000563">
    <property type="protein sequence ID" value="ABN61124.1"/>
    <property type="molecule type" value="Genomic_DNA"/>
</dbReference>
<dbReference type="RefSeq" id="WP_011846466.1">
    <property type="nucleotide sequence ID" value="NC_009052.1"/>
</dbReference>
<dbReference type="SMR" id="A3D311"/>
<dbReference type="STRING" id="325240.Sbal_1610"/>
<dbReference type="KEGG" id="sbl:Sbal_1610"/>
<dbReference type="HOGENOM" id="CLU_057698_1_0_6"/>
<dbReference type="OrthoDB" id="9802260at2"/>
<dbReference type="UniPathway" id="UPA00094"/>
<dbReference type="Proteomes" id="UP000001557">
    <property type="component" value="Chromosome"/>
</dbReference>
<dbReference type="GO" id="GO:0004318">
    <property type="term" value="F:enoyl-[acyl-carrier-protein] reductase (NADH) activity"/>
    <property type="evidence" value="ECO:0007669"/>
    <property type="project" value="UniProtKB-UniRule"/>
</dbReference>
<dbReference type="GO" id="GO:0051287">
    <property type="term" value="F:NAD binding"/>
    <property type="evidence" value="ECO:0007669"/>
    <property type="project" value="UniProtKB-UniRule"/>
</dbReference>
<dbReference type="GO" id="GO:0050343">
    <property type="term" value="F:trans-2-enoyl-CoA reductase (NADH) activity"/>
    <property type="evidence" value="ECO:0007669"/>
    <property type="project" value="TreeGrafter"/>
</dbReference>
<dbReference type="GO" id="GO:0006633">
    <property type="term" value="P:fatty acid biosynthetic process"/>
    <property type="evidence" value="ECO:0007669"/>
    <property type="project" value="UniProtKB-UniRule"/>
</dbReference>
<dbReference type="FunFam" id="3.40.50.720:FF:000221">
    <property type="entry name" value="Enoyl-[acyl-carrier-protein] reductase [NADH]"/>
    <property type="match status" value="1"/>
</dbReference>
<dbReference type="Gene3D" id="3.40.50.720">
    <property type="entry name" value="NAD(P)-binding Rossmann-like Domain"/>
    <property type="match status" value="1"/>
</dbReference>
<dbReference type="HAMAP" id="MF_01838">
    <property type="entry name" value="FabV_reductase"/>
    <property type="match status" value="1"/>
</dbReference>
<dbReference type="InterPro" id="IPR024906">
    <property type="entry name" value="Eno_Rdtase_FAD-bd_dom"/>
</dbReference>
<dbReference type="InterPro" id="IPR024910">
    <property type="entry name" value="Enoyl-CoA_Rdtase_cat_dom"/>
</dbReference>
<dbReference type="InterPro" id="IPR050048">
    <property type="entry name" value="FabV-like_NADH_b"/>
</dbReference>
<dbReference type="InterPro" id="IPR010758">
    <property type="entry name" value="Trans-2-enoyl-CoA_reductase"/>
</dbReference>
<dbReference type="NCBIfam" id="NF043048">
    <property type="entry name" value="EnoyACPredFabV"/>
    <property type="match status" value="1"/>
</dbReference>
<dbReference type="NCBIfam" id="NF010177">
    <property type="entry name" value="PRK13656.1"/>
    <property type="match status" value="1"/>
</dbReference>
<dbReference type="PANTHER" id="PTHR37480">
    <property type="entry name" value="ENOYL-[ACYL-CARRIER-PROTEIN] REDUCTASE [NADH]"/>
    <property type="match status" value="1"/>
</dbReference>
<dbReference type="PANTHER" id="PTHR37480:SF1">
    <property type="entry name" value="ENOYL-[ACYL-CARRIER-PROTEIN] REDUCTASE [NADH]"/>
    <property type="match status" value="1"/>
</dbReference>
<dbReference type="Pfam" id="PF07055">
    <property type="entry name" value="Eno-Rase_FAD_bd"/>
    <property type="match status" value="1"/>
</dbReference>
<dbReference type="Pfam" id="PF12242">
    <property type="entry name" value="Eno-Rase_NADH_b"/>
    <property type="match status" value="1"/>
</dbReference>
<dbReference type="Pfam" id="PF12241">
    <property type="entry name" value="Enoyl_reductase"/>
    <property type="match status" value="1"/>
</dbReference>
<proteinExistence type="inferred from homology"/>
<organism>
    <name type="scientific">Shewanella baltica (strain OS155 / ATCC BAA-1091)</name>
    <dbReference type="NCBI Taxonomy" id="325240"/>
    <lineage>
        <taxon>Bacteria</taxon>
        <taxon>Pseudomonadati</taxon>
        <taxon>Pseudomonadota</taxon>
        <taxon>Gammaproteobacteria</taxon>
        <taxon>Alteromonadales</taxon>
        <taxon>Shewanellaceae</taxon>
        <taxon>Shewanella</taxon>
    </lineage>
</organism>